<evidence type="ECO:0000255" key="1">
    <source>
        <dbReference type="HAMAP-Rule" id="MF_01646"/>
    </source>
</evidence>
<gene>
    <name evidence="1" type="primary">cysG</name>
    <name type="ordered locus">XF_0832</name>
</gene>
<comment type="function">
    <text evidence="1">Multifunctional enzyme that catalyzes the SAM-dependent methylations of uroporphyrinogen III at position C-2 and C-7 to form precorrin-2 via precorrin-1. Then it catalyzes the NAD-dependent ring dehydrogenation of precorrin-2 to yield sirohydrochlorin. Finally, it catalyzes the ferrochelation of sirohydrochlorin to yield siroheme.</text>
</comment>
<comment type="catalytic activity">
    <reaction evidence="1">
        <text>uroporphyrinogen III + 2 S-adenosyl-L-methionine = precorrin-2 + 2 S-adenosyl-L-homocysteine + H(+)</text>
        <dbReference type="Rhea" id="RHEA:32459"/>
        <dbReference type="ChEBI" id="CHEBI:15378"/>
        <dbReference type="ChEBI" id="CHEBI:57308"/>
        <dbReference type="ChEBI" id="CHEBI:57856"/>
        <dbReference type="ChEBI" id="CHEBI:58827"/>
        <dbReference type="ChEBI" id="CHEBI:59789"/>
        <dbReference type="EC" id="2.1.1.107"/>
    </reaction>
</comment>
<comment type="catalytic activity">
    <reaction evidence="1">
        <text>precorrin-2 + NAD(+) = sirohydrochlorin + NADH + 2 H(+)</text>
        <dbReference type="Rhea" id="RHEA:15613"/>
        <dbReference type="ChEBI" id="CHEBI:15378"/>
        <dbReference type="ChEBI" id="CHEBI:57540"/>
        <dbReference type="ChEBI" id="CHEBI:57945"/>
        <dbReference type="ChEBI" id="CHEBI:58351"/>
        <dbReference type="ChEBI" id="CHEBI:58827"/>
        <dbReference type="EC" id="1.3.1.76"/>
    </reaction>
</comment>
<comment type="catalytic activity">
    <reaction evidence="1">
        <text>siroheme + 2 H(+) = sirohydrochlorin + Fe(2+)</text>
        <dbReference type="Rhea" id="RHEA:24360"/>
        <dbReference type="ChEBI" id="CHEBI:15378"/>
        <dbReference type="ChEBI" id="CHEBI:29033"/>
        <dbReference type="ChEBI" id="CHEBI:58351"/>
        <dbReference type="ChEBI" id="CHEBI:60052"/>
        <dbReference type="EC" id="4.99.1.4"/>
    </reaction>
</comment>
<comment type="pathway">
    <text evidence="1">Cofactor biosynthesis; adenosylcobalamin biosynthesis; precorrin-2 from uroporphyrinogen III: step 1/1.</text>
</comment>
<comment type="pathway">
    <text evidence="1">Cofactor biosynthesis; adenosylcobalamin biosynthesis; sirohydrochlorin from precorrin-2: step 1/1.</text>
</comment>
<comment type="pathway">
    <text evidence="1">Porphyrin-containing compound metabolism; siroheme biosynthesis; precorrin-2 from uroporphyrinogen III: step 1/1.</text>
</comment>
<comment type="pathway">
    <text evidence="1">Porphyrin-containing compound metabolism; siroheme biosynthesis; siroheme from sirohydrochlorin: step 1/1.</text>
</comment>
<comment type="pathway">
    <text evidence="1">Porphyrin-containing compound metabolism; siroheme biosynthesis; sirohydrochlorin from precorrin-2: step 1/1.</text>
</comment>
<comment type="similarity">
    <text evidence="1">In the N-terminal section; belongs to the precorrin-2 dehydrogenase / sirohydrochlorin ferrochelatase family.</text>
</comment>
<comment type="similarity">
    <text evidence="1">In the C-terminal section; belongs to the precorrin methyltransferase family.</text>
</comment>
<dbReference type="EC" id="2.1.1.107" evidence="1"/>
<dbReference type="EC" id="1.3.1.76" evidence="1"/>
<dbReference type="EC" id="4.99.1.4" evidence="1"/>
<dbReference type="EMBL" id="AE003849">
    <property type="protein sequence ID" value="AAF83642.1"/>
    <property type="molecule type" value="Genomic_DNA"/>
</dbReference>
<dbReference type="PIR" id="E82758">
    <property type="entry name" value="E82758"/>
</dbReference>
<dbReference type="SMR" id="Q9PF46"/>
<dbReference type="STRING" id="160492.XF_0832"/>
<dbReference type="KEGG" id="xfa:XF_0832"/>
<dbReference type="eggNOG" id="COG0007">
    <property type="taxonomic scope" value="Bacteria"/>
</dbReference>
<dbReference type="eggNOG" id="COG1648">
    <property type="taxonomic scope" value="Bacteria"/>
</dbReference>
<dbReference type="HOGENOM" id="CLU_011276_2_1_6"/>
<dbReference type="UniPathway" id="UPA00148">
    <property type="reaction ID" value="UER00211"/>
</dbReference>
<dbReference type="UniPathway" id="UPA00148">
    <property type="reaction ID" value="UER00222"/>
</dbReference>
<dbReference type="UniPathway" id="UPA00262">
    <property type="reaction ID" value="UER00211"/>
</dbReference>
<dbReference type="UniPathway" id="UPA00262">
    <property type="reaction ID" value="UER00222"/>
</dbReference>
<dbReference type="UniPathway" id="UPA00262">
    <property type="reaction ID" value="UER00376"/>
</dbReference>
<dbReference type="Proteomes" id="UP000000812">
    <property type="component" value="Chromosome"/>
</dbReference>
<dbReference type="GO" id="GO:0051287">
    <property type="term" value="F:NAD binding"/>
    <property type="evidence" value="ECO:0007669"/>
    <property type="project" value="InterPro"/>
</dbReference>
<dbReference type="GO" id="GO:0043115">
    <property type="term" value="F:precorrin-2 dehydrogenase activity"/>
    <property type="evidence" value="ECO:0007669"/>
    <property type="project" value="UniProtKB-UniRule"/>
</dbReference>
<dbReference type="GO" id="GO:0051266">
    <property type="term" value="F:sirohydrochlorin ferrochelatase activity"/>
    <property type="evidence" value="ECO:0007669"/>
    <property type="project" value="UniProtKB-EC"/>
</dbReference>
<dbReference type="GO" id="GO:0004851">
    <property type="term" value="F:uroporphyrin-III C-methyltransferase activity"/>
    <property type="evidence" value="ECO:0007669"/>
    <property type="project" value="UniProtKB-UniRule"/>
</dbReference>
<dbReference type="GO" id="GO:0009236">
    <property type="term" value="P:cobalamin biosynthetic process"/>
    <property type="evidence" value="ECO:0007669"/>
    <property type="project" value="UniProtKB-UniRule"/>
</dbReference>
<dbReference type="GO" id="GO:0032259">
    <property type="term" value="P:methylation"/>
    <property type="evidence" value="ECO:0007669"/>
    <property type="project" value="UniProtKB-KW"/>
</dbReference>
<dbReference type="GO" id="GO:0019354">
    <property type="term" value="P:siroheme biosynthetic process"/>
    <property type="evidence" value="ECO:0007669"/>
    <property type="project" value="UniProtKB-UniRule"/>
</dbReference>
<dbReference type="CDD" id="cd11642">
    <property type="entry name" value="SUMT"/>
    <property type="match status" value="1"/>
</dbReference>
<dbReference type="FunFam" id="3.30.950.10:FF:000001">
    <property type="entry name" value="Siroheme synthase"/>
    <property type="match status" value="1"/>
</dbReference>
<dbReference type="FunFam" id="3.40.1010.10:FF:000001">
    <property type="entry name" value="Siroheme synthase"/>
    <property type="match status" value="1"/>
</dbReference>
<dbReference type="Gene3D" id="3.40.1010.10">
    <property type="entry name" value="Cobalt-precorrin-4 Transmethylase, Domain 1"/>
    <property type="match status" value="1"/>
</dbReference>
<dbReference type="Gene3D" id="3.30.950.10">
    <property type="entry name" value="Methyltransferase, Cobalt-precorrin-4 Transmethylase, Domain 2"/>
    <property type="match status" value="1"/>
</dbReference>
<dbReference type="Gene3D" id="3.40.50.720">
    <property type="entry name" value="NAD(P)-binding Rossmann-like Domain"/>
    <property type="match status" value="1"/>
</dbReference>
<dbReference type="Gene3D" id="1.10.8.210">
    <property type="entry name" value="Sirohaem synthase, dimerisation domain"/>
    <property type="match status" value="1"/>
</dbReference>
<dbReference type="Gene3D" id="3.30.160.110">
    <property type="entry name" value="Siroheme synthase, domain 2"/>
    <property type="match status" value="1"/>
</dbReference>
<dbReference type="HAMAP" id="MF_01646">
    <property type="entry name" value="Siroheme_synth"/>
    <property type="match status" value="1"/>
</dbReference>
<dbReference type="InterPro" id="IPR000878">
    <property type="entry name" value="4pyrrol_Mease"/>
</dbReference>
<dbReference type="InterPro" id="IPR035996">
    <property type="entry name" value="4pyrrol_Methylase_sf"/>
</dbReference>
<dbReference type="InterPro" id="IPR014777">
    <property type="entry name" value="4pyrrole_Mease_sub1"/>
</dbReference>
<dbReference type="InterPro" id="IPR014776">
    <property type="entry name" value="4pyrrole_Mease_sub2"/>
</dbReference>
<dbReference type="InterPro" id="IPR006366">
    <property type="entry name" value="CobA/CysG_C"/>
</dbReference>
<dbReference type="InterPro" id="IPR036291">
    <property type="entry name" value="NAD(P)-bd_dom_sf"/>
</dbReference>
<dbReference type="InterPro" id="IPR050161">
    <property type="entry name" value="Siro_Cobalamin_biosynth"/>
</dbReference>
<dbReference type="InterPro" id="IPR037115">
    <property type="entry name" value="Sirohaem_synt_dimer_dom_sf"/>
</dbReference>
<dbReference type="InterPro" id="IPR012409">
    <property type="entry name" value="Sirohaem_synth"/>
</dbReference>
<dbReference type="InterPro" id="IPR028281">
    <property type="entry name" value="Sirohaem_synthase_central"/>
</dbReference>
<dbReference type="InterPro" id="IPR019478">
    <property type="entry name" value="Sirohaem_synthase_dimer_dom"/>
</dbReference>
<dbReference type="InterPro" id="IPR006367">
    <property type="entry name" value="Sirohaem_synthase_N"/>
</dbReference>
<dbReference type="InterPro" id="IPR003043">
    <property type="entry name" value="Uropor_MeTrfase_CS"/>
</dbReference>
<dbReference type="NCBIfam" id="TIGR01469">
    <property type="entry name" value="cobA_cysG_Cterm"/>
    <property type="match status" value="1"/>
</dbReference>
<dbReference type="NCBIfam" id="TIGR01470">
    <property type="entry name" value="cysG_Nterm"/>
    <property type="match status" value="1"/>
</dbReference>
<dbReference type="NCBIfam" id="NF004790">
    <property type="entry name" value="PRK06136.1"/>
    <property type="match status" value="1"/>
</dbReference>
<dbReference type="NCBIfam" id="NF007922">
    <property type="entry name" value="PRK10637.1"/>
    <property type="match status" value="1"/>
</dbReference>
<dbReference type="PANTHER" id="PTHR45790:SF1">
    <property type="entry name" value="SIROHEME SYNTHASE"/>
    <property type="match status" value="1"/>
</dbReference>
<dbReference type="PANTHER" id="PTHR45790">
    <property type="entry name" value="SIROHEME SYNTHASE-RELATED"/>
    <property type="match status" value="1"/>
</dbReference>
<dbReference type="Pfam" id="PF10414">
    <property type="entry name" value="CysG_dimeriser"/>
    <property type="match status" value="1"/>
</dbReference>
<dbReference type="Pfam" id="PF13241">
    <property type="entry name" value="NAD_binding_7"/>
    <property type="match status" value="1"/>
</dbReference>
<dbReference type="Pfam" id="PF14824">
    <property type="entry name" value="Sirohm_synth_M"/>
    <property type="match status" value="1"/>
</dbReference>
<dbReference type="Pfam" id="PF00590">
    <property type="entry name" value="TP_methylase"/>
    <property type="match status" value="1"/>
</dbReference>
<dbReference type="PIRSF" id="PIRSF036426">
    <property type="entry name" value="Sirohaem_synth"/>
    <property type="match status" value="1"/>
</dbReference>
<dbReference type="SUPFAM" id="SSF51735">
    <property type="entry name" value="NAD(P)-binding Rossmann-fold domains"/>
    <property type="match status" value="1"/>
</dbReference>
<dbReference type="SUPFAM" id="SSF75615">
    <property type="entry name" value="Siroheme synthase middle domains-like"/>
    <property type="match status" value="1"/>
</dbReference>
<dbReference type="SUPFAM" id="SSF53790">
    <property type="entry name" value="Tetrapyrrole methylase"/>
    <property type="match status" value="1"/>
</dbReference>
<dbReference type="PROSITE" id="PS00840">
    <property type="entry name" value="SUMT_2"/>
    <property type="match status" value="1"/>
</dbReference>
<protein>
    <recommendedName>
        <fullName evidence="1">Siroheme synthase</fullName>
    </recommendedName>
    <domain>
        <recommendedName>
            <fullName evidence="1">Uroporphyrinogen-III C-methyltransferase</fullName>
            <shortName evidence="1">Urogen III methylase</shortName>
            <ecNumber evidence="1">2.1.1.107</ecNumber>
        </recommendedName>
        <alternativeName>
            <fullName evidence="1">SUMT</fullName>
        </alternativeName>
        <alternativeName>
            <fullName evidence="1">Uroporphyrinogen III methylase</fullName>
            <shortName evidence="1">UROM</shortName>
        </alternativeName>
    </domain>
    <domain>
        <recommendedName>
            <fullName evidence="1">Precorrin-2 dehydrogenase</fullName>
            <ecNumber evidence="1">1.3.1.76</ecNumber>
        </recommendedName>
    </domain>
    <domain>
        <recommendedName>
            <fullName evidence="1">Sirohydrochlorin ferrochelatase</fullName>
            <ecNumber evidence="1">4.99.1.4</ecNumber>
        </recommendedName>
    </domain>
</protein>
<keyword id="KW-0169">Cobalamin biosynthesis</keyword>
<keyword id="KW-0456">Lyase</keyword>
<keyword id="KW-0489">Methyltransferase</keyword>
<keyword id="KW-0511">Multifunctional enzyme</keyword>
<keyword id="KW-0520">NAD</keyword>
<keyword id="KW-0560">Oxidoreductase</keyword>
<keyword id="KW-0597">Phosphoprotein</keyword>
<keyword id="KW-0627">Porphyrin biosynthesis</keyword>
<keyword id="KW-0949">S-adenosyl-L-methionine</keyword>
<keyword id="KW-0808">Transferase</keyword>
<organism>
    <name type="scientific">Xylella fastidiosa (strain 9a5c)</name>
    <dbReference type="NCBI Taxonomy" id="160492"/>
    <lineage>
        <taxon>Bacteria</taxon>
        <taxon>Pseudomonadati</taxon>
        <taxon>Pseudomonadota</taxon>
        <taxon>Gammaproteobacteria</taxon>
        <taxon>Lysobacterales</taxon>
        <taxon>Lysobacteraceae</taxon>
        <taxon>Xylella</taxon>
    </lineage>
</organism>
<feature type="chain" id="PRO_0000330568" description="Siroheme synthase">
    <location>
        <begin position="1"/>
        <end position="476"/>
    </location>
</feature>
<feature type="region of interest" description="Precorrin-2 dehydrogenase /sirohydrochlorin ferrochelatase" evidence="1">
    <location>
        <begin position="1"/>
        <end position="207"/>
    </location>
</feature>
<feature type="region of interest" description="Uroporphyrinogen-III C-methyltransferase" evidence="1">
    <location>
        <begin position="220"/>
        <end position="476"/>
    </location>
</feature>
<feature type="active site" description="Proton acceptor" evidence="1">
    <location>
        <position position="252"/>
    </location>
</feature>
<feature type="active site" description="Proton donor" evidence="1">
    <location>
        <position position="274"/>
    </location>
</feature>
<feature type="binding site" evidence="1">
    <location>
        <begin position="25"/>
        <end position="26"/>
    </location>
    <ligand>
        <name>NAD(+)</name>
        <dbReference type="ChEBI" id="CHEBI:57540"/>
    </ligand>
</feature>
<feature type="binding site" evidence="1">
    <location>
        <begin position="46"/>
        <end position="47"/>
    </location>
    <ligand>
        <name>NAD(+)</name>
        <dbReference type="ChEBI" id="CHEBI:57540"/>
    </ligand>
</feature>
<feature type="binding site" evidence="1">
    <location>
        <begin position="305"/>
        <end position="307"/>
    </location>
    <ligand>
        <name>S-adenosyl-L-methionine</name>
        <dbReference type="ChEBI" id="CHEBI:59789"/>
    </ligand>
</feature>
<feature type="binding site" evidence="1">
    <location>
        <position position="310"/>
    </location>
    <ligand>
        <name>S-adenosyl-L-methionine</name>
        <dbReference type="ChEBI" id="CHEBI:59789"/>
    </ligand>
</feature>
<feature type="binding site" evidence="1">
    <location>
        <begin position="335"/>
        <end position="336"/>
    </location>
    <ligand>
        <name>S-adenosyl-L-methionine</name>
        <dbReference type="ChEBI" id="CHEBI:59789"/>
    </ligand>
</feature>
<feature type="binding site" evidence="1">
    <location>
        <position position="387"/>
    </location>
    <ligand>
        <name>S-adenosyl-L-methionine</name>
        <dbReference type="ChEBI" id="CHEBI:59789"/>
    </ligand>
</feature>
<feature type="binding site" evidence="1">
    <location>
        <position position="416"/>
    </location>
    <ligand>
        <name>S-adenosyl-L-methionine</name>
        <dbReference type="ChEBI" id="CHEBI:59789"/>
    </ligand>
</feature>
<feature type="modified residue" description="Phosphoserine" evidence="1">
    <location>
        <position position="132"/>
    </location>
</feature>
<name>CYSG_XYLFA</name>
<sequence length="476" mass="51598">MTANVLFPLFANLHDRAVLVVGGGKVAERKTEALLKVGALPIIGAPSLTASLQHWAETGRITWRQGTFENSWLQEDIWLVIAATDQPEVNHAAARAAHAQRLFVNVVDDIALSNVQVPAVVERGPLRIAISSGGGAPMVARYLRQQLESLIDDSWGRLTTLFAQRRDTIRARYPNIEARRRFFETQLTGPLQRLLRKQRHAEAEAVLEAALAETPPTGSGSVTLVGAGAGDAGLLTLNALRALNEADIILYDRLVSDTVLQVARRDAEQIEVGKSATGHSVRQEDIHSLMLQHARAGQRVVRLKGGDPFVFGRGGEELEFLRTHNIPYEVIPGITAALACAAYAGIPLTHRDHAQSLCLITAHCQSSLDTLDWAALAQERQTLAFYMGVAGLPTIQQRLCEAGRAETTPFALIENGARAQQRVLTGTLKTLAHTAQTYAVRPPALLILGEVTTLAEHLHWFGTAPLSAPCPPALIL</sequence>
<accession>Q9PF46</accession>
<proteinExistence type="inferred from homology"/>
<reference key="1">
    <citation type="journal article" date="2000" name="Nature">
        <title>The genome sequence of the plant pathogen Xylella fastidiosa.</title>
        <authorList>
            <person name="Simpson A.J.G."/>
            <person name="Reinach F.C."/>
            <person name="Arruda P."/>
            <person name="Abreu F.A."/>
            <person name="Acencio M."/>
            <person name="Alvarenga R."/>
            <person name="Alves L.M.C."/>
            <person name="Araya J.E."/>
            <person name="Baia G.S."/>
            <person name="Baptista C.S."/>
            <person name="Barros M.H."/>
            <person name="Bonaccorsi E.D."/>
            <person name="Bordin S."/>
            <person name="Bove J.M."/>
            <person name="Briones M.R.S."/>
            <person name="Bueno M.R.P."/>
            <person name="Camargo A.A."/>
            <person name="Camargo L.E.A."/>
            <person name="Carraro D.M."/>
            <person name="Carrer H."/>
            <person name="Colauto N.B."/>
            <person name="Colombo C."/>
            <person name="Costa F.F."/>
            <person name="Costa M.C.R."/>
            <person name="Costa-Neto C.M."/>
            <person name="Coutinho L.L."/>
            <person name="Cristofani M."/>
            <person name="Dias-Neto E."/>
            <person name="Docena C."/>
            <person name="El-Dorry H."/>
            <person name="Facincani A.P."/>
            <person name="Ferreira A.J.S."/>
            <person name="Ferreira V.C.A."/>
            <person name="Ferro J.A."/>
            <person name="Fraga J.S."/>
            <person name="Franca S.C."/>
            <person name="Franco M.C."/>
            <person name="Frohme M."/>
            <person name="Furlan L.R."/>
            <person name="Garnier M."/>
            <person name="Goldman G.H."/>
            <person name="Goldman M.H.S."/>
            <person name="Gomes S.L."/>
            <person name="Gruber A."/>
            <person name="Ho P.L."/>
            <person name="Hoheisel J.D."/>
            <person name="Junqueira M.L."/>
            <person name="Kemper E.L."/>
            <person name="Kitajima J.P."/>
            <person name="Krieger J.E."/>
            <person name="Kuramae E.E."/>
            <person name="Laigret F."/>
            <person name="Lambais M.R."/>
            <person name="Leite L.C.C."/>
            <person name="Lemos E.G.M."/>
            <person name="Lemos M.V.F."/>
            <person name="Lopes S.A."/>
            <person name="Lopes C.R."/>
            <person name="Machado J.A."/>
            <person name="Machado M.A."/>
            <person name="Madeira A.M.B.N."/>
            <person name="Madeira H.M.F."/>
            <person name="Marino C.L."/>
            <person name="Marques M.V."/>
            <person name="Martins E.A.L."/>
            <person name="Martins E.M.F."/>
            <person name="Matsukuma A.Y."/>
            <person name="Menck C.F.M."/>
            <person name="Miracca E.C."/>
            <person name="Miyaki C.Y."/>
            <person name="Monteiro-Vitorello C.B."/>
            <person name="Moon D.H."/>
            <person name="Nagai M.A."/>
            <person name="Nascimento A.L.T.O."/>
            <person name="Netto L.E.S."/>
            <person name="Nhani A. Jr."/>
            <person name="Nobrega F.G."/>
            <person name="Nunes L.R."/>
            <person name="Oliveira M.A."/>
            <person name="de Oliveira M.C."/>
            <person name="de Oliveira R.C."/>
            <person name="Palmieri D.A."/>
            <person name="Paris A."/>
            <person name="Peixoto B.R."/>
            <person name="Pereira G.A.G."/>
            <person name="Pereira H.A. Jr."/>
            <person name="Pesquero J.B."/>
            <person name="Quaggio R.B."/>
            <person name="Roberto P.G."/>
            <person name="Rodrigues V."/>
            <person name="de Rosa A.J.M."/>
            <person name="de Rosa V.E. Jr."/>
            <person name="de Sa R.G."/>
            <person name="Santelli R.V."/>
            <person name="Sawasaki H.E."/>
            <person name="da Silva A.C.R."/>
            <person name="da Silva A.M."/>
            <person name="da Silva F.R."/>
            <person name="Silva W.A. Jr."/>
            <person name="da Silveira J.F."/>
            <person name="Silvestri M.L.Z."/>
            <person name="Siqueira W.J."/>
            <person name="de Souza A.A."/>
            <person name="de Souza A.P."/>
            <person name="Terenzi M.F."/>
            <person name="Truffi D."/>
            <person name="Tsai S.M."/>
            <person name="Tsuhako M.H."/>
            <person name="Vallada H."/>
            <person name="Van Sluys M.A."/>
            <person name="Verjovski-Almeida S."/>
            <person name="Vettore A.L."/>
            <person name="Zago M.A."/>
            <person name="Zatz M."/>
            <person name="Meidanis J."/>
            <person name="Setubal J.C."/>
        </authorList>
    </citation>
    <scope>NUCLEOTIDE SEQUENCE [LARGE SCALE GENOMIC DNA]</scope>
    <source>
        <strain>9a5c</strain>
    </source>
</reference>